<proteinExistence type="evidence at protein level"/>
<sequence length="126" mass="14352">VEGSLVQFETLIMKLAKRSGFFWYSFYGCYCGWGGHGLPQDPTDRCCFVHDCCYGKVTNCNPKTATYSYTEENDGIVCGGDDPCKKQVCECDRVAAMCFRDNKDTYDSDKYWKLPPQKCQEDPEPC</sequence>
<dbReference type="EC" id="3.1.1.4"/>
<dbReference type="EMBL" id="AF104069">
    <property type="protein sequence ID" value="AAF03253.1"/>
    <property type="molecule type" value="mRNA"/>
</dbReference>
<dbReference type="SMR" id="Q9PVF0"/>
<dbReference type="GO" id="GO:0005576">
    <property type="term" value="C:extracellular region"/>
    <property type="evidence" value="ECO:0007669"/>
    <property type="project" value="UniProtKB-SubCell"/>
</dbReference>
<dbReference type="GO" id="GO:0005509">
    <property type="term" value="F:calcium ion binding"/>
    <property type="evidence" value="ECO:0007669"/>
    <property type="project" value="InterPro"/>
</dbReference>
<dbReference type="GO" id="GO:0047498">
    <property type="term" value="F:calcium-dependent phospholipase A2 activity"/>
    <property type="evidence" value="ECO:0007669"/>
    <property type="project" value="TreeGrafter"/>
</dbReference>
<dbReference type="GO" id="GO:0005543">
    <property type="term" value="F:phospholipid binding"/>
    <property type="evidence" value="ECO:0007669"/>
    <property type="project" value="TreeGrafter"/>
</dbReference>
<dbReference type="GO" id="GO:0090729">
    <property type="term" value="F:toxin activity"/>
    <property type="evidence" value="ECO:0007669"/>
    <property type="project" value="UniProtKB-KW"/>
</dbReference>
<dbReference type="GO" id="GO:0050482">
    <property type="term" value="P:arachidonate secretion"/>
    <property type="evidence" value="ECO:0007669"/>
    <property type="project" value="InterPro"/>
</dbReference>
<dbReference type="GO" id="GO:0016042">
    <property type="term" value="P:lipid catabolic process"/>
    <property type="evidence" value="ECO:0007669"/>
    <property type="project" value="UniProtKB-KW"/>
</dbReference>
<dbReference type="GO" id="GO:0042130">
    <property type="term" value="P:negative regulation of T cell proliferation"/>
    <property type="evidence" value="ECO:0007669"/>
    <property type="project" value="TreeGrafter"/>
</dbReference>
<dbReference type="GO" id="GO:0006644">
    <property type="term" value="P:phospholipid metabolic process"/>
    <property type="evidence" value="ECO:0007669"/>
    <property type="project" value="InterPro"/>
</dbReference>
<dbReference type="CDD" id="cd00125">
    <property type="entry name" value="PLA2c"/>
    <property type="match status" value="1"/>
</dbReference>
<dbReference type="FunFam" id="1.20.90.10:FF:000001">
    <property type="entry name" value="Basic phospholipase A2 homolog"/>
    <property type="match status" value="1"/>
</dbReference>
<dbReference type="Gene3D" id="1.20.90.10">
    <property type="entry name" value="Phospholipase A2 domain"/>
    <property type="match status" value="1"/>
</dbReference>
<dbReference type="InterPro" id="IPR001211">
    <property type="entry name" value="PLipase_A2"/>
</dbReference>
<dbReference type="InterPro" id="IPR033112">
    <property type="entry name" value="PLipase_A2_Asp_AS"/>
</dbReference>
<dbReference type="InterPro" id="IPR016090">
    <property type="entry name" value="PLipase_A2_dom"/>
</dbReference>
<dbReference type="InterPro" id="IPR036444">
    <property type="entry name" value="PLipase_A2_dom_sf"/>
</dbReference>
<dbReference type="InterPro" id="IPR033113">
    <property type="entry name" value="PLipase_A2_His_AS"/>
</dbReference>
<dbReference type="PANTHER" id="PTHR11716">
    <property type="entry name" value="PHOSPHOLIPASE A2 FAMILY MEMBER"/>
    <property type="match status" value="1"/>
</dbReference>
<dbReference type="PANTHER" id="PTHR11716:SF9">
    <property type="entry name" value="PHOSPHOLIPASE A2, MEMBRANE ASSOCIATED"/>
    <property type="match status" value="1"/>
</dbReference>
<dbReference type="Pfam" id="PF00068">
    <property type="entry name" value="Phospholip_A2_1"/>
    <property type="match status" value="1"/>
</dbReference>
<dbReference type="PRINTS" id="PR00389">
    <property type="entry name" value="PHPHLIPASEA2"/>
</dbReference>
<dbReference type="SMART" id="SM00085">
    <property type="entry name" value="PA2c"/>
    <property type="match status" value="1"/>
</dbReference>
<dbReference type="SUPFAM" id="SSF48619">
    <property type="entry name" value="Phospholipase A2, PLA2"/>
    <property type="match status" value="1"/>
</dbReference>
<dbReference type="PROSITE" id="PS00119">
    <property type="entry name" value="PA2_ASP"/>
    <property type="match status" value="1"/>
</dbReference>
<dbReference type="PROSITE" id="PS00118">
    <property type="entry name" value="PA2_HIS"/>
    <property type="match status" value="1"/>
</dbReference>
<keyword id="KW-0106">Calcium</keyword>
<keyword id="KW-1015">Disulfide bond</keyword>
<keyword id="KW-1199">Hemostasis impairing toxin</keyword>
<keyword id="KW-0378">Hydrolase</keyword>
<keyword id="KW-0442">Lipid degradation</keyword>
<keyword id="KW-0443">Lipid metabolism</keyword>
<keyword id="KW-0479">Metal-binding</keyword>
<keyword id="KW-1201">Platelet aggregation inhibiting toxin</keyword>
<keyword id="KW-0964">Secreted</keyword>
<keyword id="KW-0732">Signal</keyword>
<keyword id="KW-0800">Toxin</keyword>
<organism>
    <name type="scientific">Calloselasma rhodostoma</name>
    <name type="common">Malayan pit viper</name>
    <name type="synonym">Agkistrodon rhodostoma</name>
    <dbReference type="NCBI Taxonomy" id="8717"/>
    <lineage>
        <taxon>Eukaryota</taxon>
        <taxon>Metazoa</taxon>
        <taxon>Chordata</taxon>
        <taxon>Craniata</taxon>
        <taxon>Vertebrata</taxon>
        <taxon>Euteleostomi</taxon>
        <taxon>Lepidosauria</taxon>
        <taxon>Squamata</taxon>
        <taxon>Bifurcata</taxon>
        <taxon>Unidentata</taxon>
        <taxon>Episquamata</taxon>
        <taxon>Toxicofera</taxon>
        <taxon>Serpentes</taxon>
        <taxon>Colubroidea</taxon>
        <taxon>Viperidae</taxon>
        <taxon>Crotalinae</taxon>
        <taxon>Calloselasma</taxon>
    </lineage>
</organism>
<comment type="function">
    <text evidence="4">Snake venom phospholipase that inhibits ADP-induced platelet aggregation. PLA2 catalyzes the calcium-dependent hydrolysis of the 2-acyl groups in 3-sn-phosphoglycerides.</text>
</comment>
<comment type="catalytic activity">
    <reaction evidence="2 3">
        <text>a 1,2-diacyl-sn-glycero-3-phosphocholine + H2O = a 1-acyl-sn-glycero-3-phosphocholine + a fatty acid + H(+)</text>
        <dbReference type="Rhea" id="RHEA:15801"/>
        <dbReference type="ChEBI" id="CHEBI:15377"/>
        <dbReference type="ChEBI" id="CHEBI:15378"/>
        <dbReference type="ChEBI" id="CHEBI:28868"/>
        <dbReference type="ChEBI" id="CHEBI:57643"/>
        <dbReference type="ChEBI" id="CHEBI:58168"/>
        <dbReference type="EC" id="3.1.1.4"/>
    </reaction>
</comment>
<comment type="cofactor">
    <cofactor evidence="1">
        <name>Ca(2+)</name>
        <dbReference type="ChEBI" id="CHEBI:29108"/>
    </cofactor>
    <text evidence="1">Binds 1 Ca(2+) ion per subunit.</text>
</comment>
<comment type="subunit">
    <text evidence="4">Homodimer.</text>
</comment>
<comment type="subcellular location">
    <subcellularLocation>
        <location>Secreted</location>
    </subcellularLocation>
</comment>
<comment type="tissue specificity">
    <text>Expressed by the venom gland.</text>
</comment>
<comment type="mass spectrometry" mass="14052.0" method="Electrospray" evidence="4"/>
<comment type="similarity">
    <text evidence="5">Belongs to the phospholipase A2 family. Group II subfamily. D49 sub-subfamily.</text>
</comment>
<accession>Q9PVF0</accession>
<protein>
    <recommendedName>
        <fullName>Acidic phospholipase A2 S1E6-b</fullName>
        <shortName>svPLA2</shortName>
        <ecNumber>3.1.1.4</ecNumber>
    </recommendedName>
    <alternativeName>
        <fullName>Phosphatidylcholine 2-acylhydrolase</fullName>
    </alternativeName>
</protein>
<name>PA2AB_CALRH</name>
<evidence type="ECO:0000250" key="1"/>
<evidence type="ECO:0000255" key="2">
    <source>
        <dbReference type="PROSITE-ProRule" id="PRU10035"/>
    </source>
</evidence>
<evidence type="ECO:0000255" key="3">
    <source>
        <dbReference type="PROSITE-ProRule" id="PRU10036"/>
    </source>
</evidence>
<evidence type="ECO:0000269" key="4">
    <source>
    </source>
</evidence>
<evidence type="ECO:0000305" key="5"/>
<reference key="1">
    <citation type="journal article" date="2000" name="Eur. J. Biochem.">
        <title>Phospholipases A2 from Callosellasma rhodostoma venom gland. Cloning and sequencing of 10 of the cDNAs, three-dimensional modelling and chemical modification of the major isozyme.</title>
        <authorList>
            <person name="Tsai I.-H."/>
            <person name="Wang Y.-M."/>
            <person name="Au L.-C."/>
            <person name="Ko T.-P."/>
            <person name="Chen Y.-H."/>
            <person name="Chu Y.-F."/>
        </authorList>
    </citation>
    <scope>NUCLEOTIDE SEQUENCE [MRNA]</scope>
    <scope>FUNCTION</scope>
    <scope>SUBUNIT</scope>
    <scope>MASS SPECTROMETRY</scope>
    <source>
        <tissue>Venom</tissue>
        <tissue>Venom gland</tissue>
    </source>
</reference>
<feature type="signal peptide">
    <location>
        <begin position="1" status="less than"/>
        <end position="3"/>
    </location>
</feature>
<feature type="chain" id="PRO_0000022778" description="Acidic phospholipase A2 S1E6-b">
    <location>
        <begin position="4"/>
        <end position="126"/>
    </location>
</feature>
<feature type="active site" evidence="1">
    <location>
        <position position="50"/>
    </location>
</feature>
<feature type="active site" evidence="1">
    <location>
        <position position="92"/>
    </location>
</feature>
<feature type="binding site" evidence="1">
    <location>
        <position position="30"/>
    </location>
    <ligand>
        <name>Ca(2+)</name>
        <dbReference type="ChEBI" id="CHEBI:29108"/>
    </ligand>
</feature>
<feature type="binding site" evidence="1">
    <location>
        <position position="32"/>
    </location>
    <ligand>
        <name>Ca(2+)</name>
        <dbReference type="ChEBI" id="CHEBI:29108"/>
    </ligand>
</feature>
<feature type="binding site" evidence="1">
    <location>
        <position position="34"/>
    </location>
    <ligand>
        <name>Ca(2+)</name>
        <dbReference type="ChEBI" id="CHEBI:29108"/>
    </ligand>
</feature>
<feature type="binding site" evidence="1">
    <location>
        <position position="51"/>
    </location>
    <ligand>
        <name>Ca(2+)</name>
        <dbReference type="ChEBI" id="CHEBI:29108"/>
    </ligand>
</feature>
<feature type="disulfide bond" evidence="1">
    <location>
        <begin position="29"/>
        <end position="119"/>
    </location>
</feature>
<feature type="disulfide bond" evidence="1">
    <location>
        <begin position="31"/>
        <end position="47"/>
    </location>
</feature>
<feature type="disulfide bond" evidence="1">
    <location>
        <begin position="46"/>
        <end position="98"/>
    </location>
</feature>
<feature type="disulfide bond" evidence="1">
    <location>
        <begin position="52"/>
        <end position="126"/>
    </location>
</feature>
<feature type="disulfide bond" evidence="1">
    <location>
        <begin position="53"/>
        <end position="91"/>
    </location>
</feature>
<feature type="disulfide bond" evidence="1">
    <location>
        <begin position="60"/>
        <end position="84"/>
    </location>
</feature>
<feature type="disulfide bond" evidence="1">
    <location>
        <begin position="78"/>
        <end position="89"/>
    </location>
</feature>
<feature type="non-terminal residue">
    <location>
        <position position="1"/>
    </location>
</feature>